<protein>
    <recommendedName>
        <fullName evidence="1">Polyribonucleotide nucleotidyltransferase</fullName>
        <ecNumber evidence="1">2.7.7.8</ecNumber>
    </recommendedName>
    <alternativeName>
        <fullName evidence="1">Polynucleotide phosphorylase</fullName>
        <shortName evidence="1">PNPase</shortName>
    </alternativeName>
</protein>
<comment type="function">
    <text evidence="1">Involved in mRNA degradation. Catalyzes the phosphorolysis of single-stranded polyribonucleotides processively in the 3'- to 5'-direction.</text>
</comment>
<comment type="catalytic activity">
    <reaction evidence="1">
        <text>RNA(n+1) + phosphate = RNA(n) + a ribonucleoside 5'-diphosphate</text>
        <dbReference type="Rhea" id="RHEA:22096"/>
        <dbReference type="Rhea" id="RHEA-COMP:14527"/>
        <dbReference type="Rhea" id="RHEA-COMP:17342"/>
        <dbReference type="ChEBI" id="CHEBI:43474"/>
        <dbReference type="ChEBI" id="CHEBI:57930"/>
        <dbReference type="ChEBI" id="CHEBI:140395"/>
        <dbReference type="EC" id="2.7.7.8"/>
    </reaction>
</comment>
<comment type="cofactor">
    <cofactor evidence="1">
        <name>Mg(2+)</name>
        <dbReference type="ChEBI" id="CHEBI:18420"/>
    </cofactor>
</comment>
<comment type="subunit">
    <text evidence="1">Component of the RNA degradosome, which is a multiprotein complex involved in RNA processing and mRNA degradation.</text>
</comment>
<comment type="subcellular location">
    <subcellularLocation>
        <location evidence="1">Cytoplasm</location>
    </subcellularLocation>
</comment>
<comment type="similarity">
    <text evidence="1">Belongs to the polyribonucleotide nucleotidyltransferase family.</text>
</comment>
<comment type="sequence caution" evidence="3">
    <conflict type="erroneous initiation">
        <sequence resource="EMBL-CDS" id="CAR19777"/>
    </conflict>
</comment>
<organism>
    <name type="scientific">Escherichia coli O7:K1 (strain IAI39 / ExPEC)</name>
    <dbReference type="NCBI Taxonomy" id="585057"/>
    <lineage>
        <taxon>Bacteria</taxon>
        <taxon>Pseudomonadati</taxon>
        <taxon>Pseudomonadota</taxon>
        <taxon>Gammaproteobacteria</taxon>
        <taxon>Enterobacterales</taxon>
        <taxon>Enterobacteriaceae</taxon>
        <taxon>Escherichia</taxon>
    </lineage>
</organism>
<proteinExistence type="inferred from homology"/>
<sequence length="711" mass="77102">MLNPIVRKFQYGQHTVTLETGMMARQATAAVMVSMDDTAVFVTVVGQKKAKPGQDFFPLTVNYQERTYAAGRIPGSFFRREGRPSEGETLIARLIDRPIRPLFPEGFVNEVQVIATVVSVNPQVNPDIVAMIGASAALSLSGIPFNGPIGAARVGYINDQYVLNPTQDELKESKLDLVVAGTEAAVLMVESEAELLSEDQMLGAVVFGHEQQQVVIQNINELVKEAGKPRWDWQPEPVNEALNARVAALAEARLSDAYRITDKQERYAQVDVIKSETIATLLAEDETLDENELGEILHAIEKNVVRSRVLAGEPRIDGREKDMIRGLDVRTGVLPRTHGSALFTRGETQALVTATLGTARDAQVLDELMGERTDTFLFHYNFPPYSVGETGMVGSPKRREIGHGRLAKRGVLAVMPDMDKFPYTVRVVSEITESNGSSSMASVCGASLALMDAGVPIKAAVAGIAMGLVKEGDNYVVLSDILGDEDHLGDMDFKVAGSRDGISALQMDIKIEGITKEIMQVALNQAKGARLHILGVMEQAINAPRGDISEFAPRIHTIKINPDKIKDVIGKGGSVIRALTEETGTTIEIEDDGTVKIAATDGEKAKHAIRRIEEITAEIEVGRVYTGKVTRIVDFGAFVAIGGGKEGLVHISQIADKRVEKVTDYLQMGQEVPVKVLEVDRQGRIRLSIKEATEQSQPAAAPEAPAAEQGE</sequence>
<dbReference type="EC" id="2.7.7.8" evidence="1"/>
<dbReference type="EMBL" id="CU928164">
    <property type="protein sequence ID" value="CAR19777.1"/>
    <property type="status" value="ALT_INIT"/>
    <property type="molecule type" value="Genomic_DNA"/>
</dbReference>
<dbReference type="RefSeq" id="WP_001298740.1">
    <property type="nucleotide sequence ID" value="NC_011750.1"/>
</dbReference>
<dbReference type="RefSeq" id="YP_002409564.1">
    <property type="nucleotide sequence ID" value="NC_011750.1"/>
</dbReference>
<dbReference type="SMR" id="B7NKN3"/>
<dbReference type="STRING" id="585057.ECIAI39_3661"/>
<dbReference type="GeneID" id="93778819"/>
<dbReference type="KEGG" id="ect:ECIAI39_3661"/>
<dbReference type="PATRIC" id="fig|585057.6.peg.3794"/>
<dbReference type="HOGENOM" id="CLU_004217_2_2_6"/>
<dbReference type="Proteomes" id="UP000000749">
    <property type="component" value="Chromosome"/>
</dbReference>
<dbReference type="GO" id="GO:0005829">
    <property type="term" value="C:cytosol"/>
    <property type="evidence" value="ECO:0007669"/>
    <property type="project" value="TreeGrafter"/>
</dbReference>
<dbReference type="GO" id="GO:0000175">
    <property type="term" value="F:3'-5'-RNA exonuclease activity"/>
    <property type="evidence" value="ECO:0007669"/>
    <property type="project" value="TreeGrafter"/>
</dbReference>
<dbReference type="GO" id="GO:0000287">
    <property type="term" value="F:magnesium ion binding"/>
    <property type="evidence" value="ECO:0007669"/>
    <property type="project" value="UniProtKB-UniRule"/>
</dbReference>
<dbReference type="GO" id="GO:0004654">
    <property type="term" value="F:polyribonucleotide nucleotidyltransferase activity"/>
    <property type="evidence" value="ECO:0007669"/>
    <property type="project" value="UniProtKB-UniRule"/>
</dbReference>
<dbReference type="GO" id="GO:0003723">
    <property type="term" value="F:RNA binding"/>
    <property type="evidence" value="ECO:0007669"/>
    <property type="project" value="UniProtKB-UniRule"/>
</dbReference>
<dbReference type="GO" id="GO:0006402">
    <property type="term" value="P:mRNA catabolic process"/>
    <property type="evidence" value="ECO:0007669"/>
    <property type="project" value="UniProtKB-UniRule"/>
</dbReference>
<dbReference type="GO" id="GO:0006396">
    <property type="term" value="P:RNA processing"/>
    <property type="evidence" value="ECO:0007669"/>
    <property type="project" value="InterPro"/>
</dbReference>
<dbReference type="CDD" id="cd02393">
    <property type="entry name" value="KH-I_PNPase"/>
    <property type="match status" value="1"/>
</dbReference>
<dbReference type="CDD" id="cd11363">
    <property type="entry name" value="RNase_PH_PNPase_1"/>
    <property type="match status" value="1"/>
</dbReference>
<dbReference type="CDD" id="cd11364">
    <property type="entry name" value="RNase_PH_PNPase_2"/>
    <property type="match status" value="1"/>
</dbReference>
<dbReference type="CDD" id="cd04472">
    <property type="entry name" value="S1_PNPase"/>
    <property type="match status" value="1"/>
</dbReference>
<dbReference type="FunFam" id="2.40.50.140:FF:000023">
    <property type="entry name" value="Polyribonucleotide nucleotidyltransferase"/>
    <property type="match status" value="1"/>
</dbReference>
<dbReference type="FunFam" id="3.30.1370.10:FF:000001">
    <property type="entry name" value="Polyribonucleotide nucleotidyltransferase"/>
    <property type="match status" value="1"/>
</dbReference>
<dbReference type="FunFam" id="3.30.230.70:FF:000001">
    <property type="entry name" value="Polyribonucleotide nucleotidyltransferase"/>
    <property type="match status" value="1"/>
</dbReference>
<dbReference type="FunFam" id="3.30.230.70:FF:000002">
    <property type="entry name" value="Polyribonucleotide nucleotidyltransferase"/>
    <property type="match status" value="1"/>
</dbReference>
<dbReference type="Gene3D" id="3.30.230.70">
    <property type="entry name" value="GHMP Kinase, N-terminal domain"/>
    <property type="match status" value="2"/>
</dbReference>
<dbReference type="Gene3D" id="3.30.1370.10">
    <property type="entry name" value="K Homology domain, type 1"/>
    <property type="match status" value="1"/>
</dbReference>
<dbReference type="Gene3D" id="2.40.50.140">
    <property type="entry name" value="Nucleic acid-binding proteins"/>
    <property type="match status" value="1"/>
</dbReference>
<dbReference type="HAMAP" id="MF_01595">
    <property type="entry name" value="PNPase"/>
    <property type="match status" value="1"/>
</dbReference>
<dbReference type="InterPro" id="IPR001247">
    <property type="entry name" value="ExoRNase_PH_dom1"/>
</dbReference>
<dbReference type="InterPro" id="IPR015847">
    <property type="entry name" value="ExoRNase_PH_dom2"/>
</dbReference>
<dbReference type="InterPro" id="IPR036345">
    <property type="entry name" value="ExoRNase_PH_dom2_sf"/>
</dbReference>
<dbReference type="InterPro" id="IPR004087">
    <property type="entry name" value="KH_dom"/>
</dbReference>
<dbReference type="InterPro" id="IPR004088">
    <property type="entry name" value="KH_dom_type_1"/>
</dbReference>
<dbReference type="InterPro" id="IPR036612">
    <property type="entry name" value="KH_dom_type_1_sf"/>
</dbReference>
<dbReference type="InterPro" id="IPR012340">
    <property type="entry name" value="NA-bd_OB-fold"/>
</dbReference>
<dbReference type="InterPro" id="IPR012162">
    <property type="entry name" value="PNPase"/>
</dbReference>
<dbReference type="InterPro" id="IPR027408">
    <property type="entry name" value="PNPase/RNase_PH_dom_sf"/>
</dbReference>
<dbReference type="InterPro" id="IPR015848">
    <property type="entry name" value="PNPase_PH_RNA-bd_bac/org-type"/>
</dbReference>
<dbReference type="InterPro" id="IPR036456">
    <property type="entry name" value="PNPase_PH_RNA-bd_sf"/>
</dbReference>
<dbReference type="InterPro" id="IPR020568">
    <property type="entry name" value="Ribosomal_Su5_D2-typ_SF"/>
</dbReference>
<dbReference type="InterPro" id="IPR003029">
    <property type="entry name" value="S1_domain"/>
</dbReference>
<dbReference type="NCBIfam" id="TIGR03591">
    <property type="entry name" value="polynuc_phos"/>
    <property type="match status" value="1"/>
</dbReference>
<dbReference type="NCBIfam" id="NF008805">
    <property type="entry name" value="PRK11824.1"/>
    <property type="match status" value="1"/>
</dbReference>
<dbReference type="PANTHER" id="PTHR11252">
    <property type="entry name" value="POLYRIBONUCLEOTIDE NUCLEOTIDYLTRANSFERASE"/>
    <property type="match status" value="1"/>
</dbReference>
<dbReference type="PANTHER" id="PTHR11252:SF0">
    <property type="entry name" value="POLYRIBONUCLEOTIDE NUCLEOTIDYLTRANSFERASE 1, MITOCHONDRIAL"/>
    <property type="match status" value="1"/>
</dbReference>
<dbReference type="Pfam" id="PF00013">
    <property type="entry name" value="KH_1"/>
    <property type="match status" value="1"/>
</dbReference>
<dbReference type="Pfam" id="PF03726">
    <property type="entry name" value="PNPase"/>
    <property type="match status" value="1"/>
</dbReference>
<dbReference type="Pfam" id="PF01138">
    <property type="entry name" value="RNase_PH"/>
    <property type="match status" value="2"/>
</dbReference>
<dbReference type="Pfam" id="PF03725">
    <property type="entry name" value="RNase_PH_C"/>
    <property type="match status" value="2"/>
</dbReference>
<dbReference type="Pfam" id="PF00575">
    <property type="entry name" value="S1"/>
    <property type="match status" value="1"/>
</dbReference>
<dbReference type="PIRSF" id="PIRSF005499">
    <property type="entry name" value="PNPase"/>
    <property type="match status" value="1"/>
</dbReference>
<dbReference type="SMART" id="SM00322">
    <property type="entry name" value="KH"/>
    <property type="match status" value="1"/>
</dbReference>
<dbReference type="SMART" id="SM00316">
    <property type="entry name" value="S1"/>
    <property type="match status" value="1"/>
</dbReference>
<dbReference type="SUPFAM" id="SSF54791">
    <property type="entry name" value="Eukaryotic type KH-domain (KH-domain type I)"/>
    <property type="match status" value="1"/>
</dbReference>
<dbReference type="SUPFAM" id="SSF50249">
    <property type="entry name" value="Nucleic acid-binding proteins"/>
    <property type="match status" value="1"/>
</dbReference>
<dbReference type="SUPFAM" id="SSF46915">
    <property type="entry name" value="Polynucleotide phosphorylase/guanosine pentaphosphate synthase (PNPase/GPSI), domain 3"/>
    <property type="match status" value="1"/>
</dbReference>
<dbReference type="SUPFAM" id="SSF55666">
    <property type="entry name" value="Ribonuclease PH domain 2-like"/>
    <property type="match status" value="2"/>
</dbReference>
<dbReference type="SUPFAM" id="SSF54211">
    <property type="entry name" value="Ribosomal protein S5 domain 2-like"/>
    <property type="match status" value="2"/>
</dbReference>
<dbReference type="PROSITE" id="PS50084">
    <property type="entry name" value="KH_TYPE_1"/>
    <property type="match status" value="1"/>
</dbReference>
<dbReference type="PROSITE" id="PS50126">
    <property type="entry name" value="S1"/>
    <property type="match status" value="1"/>
</dbReference>
<gene>
    <name evidence="1" type="primary">pnp</name>
    <name type="ordered locus">ECIAI39_3661</name>
</gene>
<evidence type="ECO:0000255" key="1">
    <source>
        <dbReference type="HAMAP-Rule" id="MF_01595"/>
    </source>
</evidence>
<evidence type="ECO:0000256" key="2">
    <source>
        <dbReference type="SAM" id="MobiDB-lite"/>
    </source>
</evidence>
<evidence type="ECO:0000305" key="3"/>
<accession>B7NKN3</accession>
<feature type="chain" id="PRO_0000381892" description="Polyribonucleotide nucleotidyltransferase">
    <location>
        <begin position="1"/>
        <end position="711"/>
    </location>
</feature>
<feature type="domain" description="KH" evidence="1">
    <location>
        <begin position="553"/>
        <end position="612"/>
    </location>
</feature>
<feature type="domain" description="S1 motif" evidence="1">
    <location>
        <begin position="622"/>
        <end position="690"/>
    </location>
</feature>
<feature type="region of interest" description="Disordered" evidence="2">
    <location>
        <begin position="689"/>
        <end position="711"/>
    </location>
</feature>
<feature type="compositionally biased region" description="Low complexity" evidence="2">
    <location>
        <begin position="694"/>
        <end position="711"/>
    </location>
</feature>
<feature type="binding site" evidence="1">
    <location>
        <position position="486"/>
    </location>
    <ligand>
        <name>Mg(2+)</name>
        <dbReference type="ChEBI" id="CHEBI:18420"/>
    </ligand>
</feature>
<feature type="binding site" evidence="1">
    <location>
        <position position="492"/>
    </location>
    <ligand>
        <name>Mg(2+)</name>
        <dbReference type="ChEBI" id="CHEBI:18420"/>
    </ligand>
</feature>
<reference key="1">
    <citation type="journal article" date="2009" name="PLoS Genet.">
        <title>Organised genome dynamics in the Escherichia coli species results in highly diverse adaptive paths.</title>
        <authorList>
            <person name="Touchon M."/>
            <person name="Hoede C."/>
            <person name="Tenaillon O."/>
            <person name="Barbe V."/>
            <person name="Baeriswyl S."/>
            <person name="Bidet P."/>
            <person name="Bingen E."/>
            <person name="Bonacorsi S."/>
            <person name="Bouchier C."/>
            <person name="Bouvet O."/>
            <person name="Calteau A."/>
            <person name="Chiapello H."/>
            <person name="Clermont O."/>
            <person name="Cruveiller S."/>
            <person name="Danchin A."/>
            <person name="Diard M."/>
            <person name="Dossat C."/>
            <person name="Karoui M.E."/>
            <person name="Frapy E."/>
            <person name="Garry L."/>
            <person name="Ghigo J.M."/>
            <person name="Gilles A.M."/>
            <person name="Johnson J."/>
            <person name="Le Bouguenec C."/>
            <person name="Lescat M."/>
            <person name="Mangenot S."/>
            <person name="Martinez-Jehanne V."/>
            <person name="Matic I."/>
            <person name="Nassif X."/>
            <person name="Oztas S."/>
            <person name="Petit M.A."/>
            <person name="Pichon C."/>
            <person name="Rouy Z."/>
            <person name="Ruf C.S."/>
            <person name="Schneider D."/>
            <person name="Tourret J."/>
            <person name="Vacherie B."/>
            <person name="Vallenet D."/>
            <person name="Medigue C."/>
            <person name="Rocha E.P.C."/>
            <person name="Denamur E."/>
        </authorList>
    </citation>
    <scope>NUCLEOTIDE SEQUENCE [LARGE SCALE GENOMIC DNA]</scope>
    <source>
        <strain>IAI39 / ExPEC</strain>
    </source>
</reference>
<keyword id="KW-0963">Cytoplasm</keyword>
<keyword id="KW-0460">Magnesium</keyword>
<keyword id="KW-0479">Metal-binding</keyword>
<keyword id="KW-0548">Nucleotidyltransferase</keyword>
<keyword id="KW-0694">RNA-binding</keyword>
<keyword id="KW-0808">Transferase</keyword>
<name>PNP_ECO7I</name>